<protein>
    <recommendedName>
        <fullName evidence="1">Tyrosine--tRNA ligase</fullName>
        <ecNumber evidence="1">6.1.1.1</ecNumber>
    </recommendedName>
    <alternativeName>
        <fullName evidence="1">Tyrosyl-tRNA synthetase</fullName>
        <shortName evidence="1">TyrRS</shortName>
    </alternativeName>
</protein>
<reference key="1">
    <citation type="journal article" date="2003" name="Proc. Natl. Acad. Sci. U.S.A.">
        <title>The complete genome sequence of Mycobacterium bovis.</title>
        <authorList>
            <person name="Garnier T."/>
            <person name="Eiglmeier K."/>
            <person name="Camus J.-C."/>
            <person name="Medina N."/>
            <person name="Mansoor H."/>
            <person name="Pryor M."/>
            <person name="Duthoy S."/>
            <person name="Grondin S."/>
            <person name="Lacroix C."/>
            <person name="Monsempe C."/>
            <person name="Simon S."/>
            <person name="Harris B."/>
            <person name="Atkin R."/>
            <person name="Doggett J."/>
            <person name="Mayes R."/>
            <person name="Keating L."/>
            <person name="Wheeler P.R."/>
            <person name="Parkhill J."/>
            <person name="Barrell B.G."/>
            <person name="Cole S.T."/>
            <person name="Gordon S.V."/>
            <person name="Hewinson R.G."/>
        </authorList>
    </citation>
    <scope>NUCLEOTIDE SEQUENCE [LARGE SCALE GENOMIC DNA]</scope>
    <source>
        <strain>ATCC BAA-935 / AF2122/97</strain>
    </source>
</reference>
<reference key="2">
    <citation type="journal article" date="2017" name="Genome Announc.">
        <title>Updated reference genome sequence and annotation of Mycobacterium bovis AF2122/97.</title>
        <authorList>
            <person name="Malone K.M."/>
            <person name="Farrell D."/>
            <person name="Stuber T.P."/>
            <person name="Schubert O.T."/>
            <person name="Aebersold R."/>
            <person name="Robbe-Austerman S."/>
            <person name="Gordon S.V."/>
        </authorList>
    </citation>
    <scope>NUCLEOTIDE SEQUENCE [LARGE SCALE GENOMIC DNA]</scope>
    <scope>GENOME REANNOTATION</scope>
    <source>
        <strain>ATCC BAA-935 / AF2122/97</strain>
    </source>
</reference>
<keyword id="KW-0030">Aminoacyl-tRNA synthetase</keyword>
<keyword id="KW-0067">ATP-binding</keyword>
<keyword id="KW-0963">Cytoplasm</keyword>
<keyword id="KW-0436">Ligase</keyword>
<keyword id="KW-0547">Nucleotide-binding</keyword>
<keyword id="KW-0648">Protein biosynthesis</keyword>
<keyword id="KW-1185">Reference proteome</keyword>
<keyword id="KW-0694">RNA-binding</keyword>
<feature type="chain" id="PRO_0000055661" description="Tyrosine--tRNA ligase">
    <location>
        <begin position="1"/>
        <end position="424"/>
    </location>
</feature>
<feature type="domain" description="S4 RNA-binding" evidence="1">
    <location>
        <begin position="356"/>
        <end position="413"/>
    </location>
</feature>
<feature type="short sequence motif" description="'HIGH' region">
    <location>
        <begin position="41"/>
        <end position="50"/>
    </location>
</feature>
<feature type="short sequence motif" description="'KMSKS' region">
    <location>
        <begin position="231"/>
        <end position="235"/>
    </location>
</feature>
<feature type="binding site" evidence="1">
    <location>
        <position position="36"/>
    </location>
    <ligand>
        <name>L-tyrosine</name>
        <dbReference type="ChEBI" id="CHEBI:58315"/>
    </ligand>
</feature>
<feature type="binding site" evidence="1">
    <location>
        <position position="171"/>
    </location>
    <ligand>
        <name>L-tyrosine</name>
        <dbReference type="ChEBI" id="CHEBI:58315"/>
    </ligand>
</feature>
<feature type="binding site" evidence="1">
    <location>
        <position position="175"/>
    </location>
    <ligand>
        <name>L-tyrosine</name>
        <dbReference type="ChEBI" id="CHEBI:58315"/>
    </ligand>
</feature>
<feature type="binding site" evidence="1">
    <location>
        <position position="234"/>
    </location>
    <ligand>
        <name>ATP</name>
        <dbReference type="ChEBI" id="CHEBI:30616"/>
    </ligand>
</feature>
<name>SYY_MYCBO</name>
<sequence length="424" mass="46330">MSGMILDELSWRGLIAQSTDLDTLAAEAQRGPMTVYAGFDPTAPSLHAGHLVPLLTLRRFQRAGHRPIVLAGGATGMIGDPRDVGERSLNEADTVAEWTERIRGQLERFVDFDDSPMGAIVENNLEWTGSLSAIEFLRDIGKHFSVNVMLARDTIRRRLAGEGISYTEFSYLLLQANDYVELHRRHGCTLQIGGADQWGNIIAGVRLVRQKLGATVHALTVPLVTAADGTKFGKSTGGGSLWLDPQMTSPYAWYQYFVNTADADVIRYLRWFTFLSADELAELEQATAQRPQQRAAQRRLASELTVLVHGEAATAAVEHASRALFGRGELARLDEATLAAALRETTVAELKPGSPDGIVDLLVASGLSASKGAARRTIHEGGVSVNNIRVDNEEWVPQSSDFLHGRWLVLRRGKRSIAGVERIG</sequence>
<dbReference type="EC" id="6.1.1.1" evidence="1"/>
<dbReference type="EMBL" id="LT708304">
    <property type="protein sequence ID" value="SIU00319.1"/>
    <property type="molecule type" value="Genomic_DNA"/>
</dbReference>
<dbReference type="RefSeq" id="NP_855368.1">
    <property type="nucleotide sequence ID" value="NC_002945.3"/>
</dbReference>
<dbReference type="RefSeq" id="WP_003408375.1">
    <property type="nucleotide sequence ID" value="NC_002945.4"/>
</dbReference>
<dbReference type="SMR" id="P67612"/>
<dbReference type="GeneID" id="45425658"/>
<dbReference type="KEGG" id="mbo:BQ2027_MB1715"/>
<dbReference type="PATRIC" id="fig|233413.5.peg.1870"/>
<dbReference type="Proteomes" id="UP000001419">
    <property type="component" value="Chromosome"/>
</dbReference>
<dbReference type="GO" id="GO:0005829">
    <property type="term" value="C:cytosol"/>
    <property type="evidence" value="ECO:0007669"/>
    <property type="project" value="TreeGrafter"/>
</dbReference>
<dbReference type="GO" id="GO:0005524">
    <property type="term" value="F:ATP binding"/>
    <property type="evidence" value="ECO:0007669"/>
    <property type="project" value="UniProtKB-UniRule"/>
</dbReference>
<dbReference type="GO" id="GO:0003723">
    <property type="term" value="F:RNA binding"/>
    <property type="evidence" value="ECO:0007669"/>
    <property type="project" value="UniProtKB-KW"/>
</dbReference>
<dbReference type="GO" id="GO:0004831">
    <property type="term" value="F:tyrosine-tRNA ligase activity"/>
    <property type="evidence" value="ECO:0007669"/>
    <property type="project" value="UniProtKB-UniRule"/>
</dbReference>
<dbReference type="GO" id="GO:0006437">
    <property type="term" value="P:tyrosyl-tRNA aminoacylation"/>
    <property type="evidence" value="ECO:0007669"/>
    <property type="project" value="UniProtKB-UniRule"/>
</dbReference>
<dbReference type="CDD" id="cd00165">
    <property type="entry name" value="S4"/>
    <property type="match status" value="1"/>
</dbReference>
<dbReference type="CDD" id="cd00805">
    <property type="entry name" value="TyrRS_core"/>
    <property type="match status" value="1"/>
</dbReference>
<dbReference type="FunFam" id="1.10.240.10:FF:000001">
    <property type="entry name" value="Tyrosine--tRNA ligase"/>
    <property type="match status" value="1"/>
</dbReference>
<dbReference type="FunFam" id="3.10.290.10:FF:000014">
    <property type="entry name" value="Tyrosine--tRNA ligase"/>
    <property type="match status" value="1"/>
</dbReference>
<dbReference type="FunFam" id="3.40.50.620:FF:000008">
    <property type="entry name" value="Tyrosine--tRNA ligase"/>
    <property type="match status" value="1"/>
</dbReference>
<dbReference type="Gene3D" id="3.40.50.620">
    <property type="entry name" value="HUPs"/>
    <property type="match status" value="1"/>
</dbReference>
<dbReference type="Gene3D" id="3.10.290.10">
    <property type="entry name" value="RNA-binding S4 domain"/>
    <property type="match status" value="1"/>
</dbReference>
<dbReference type="Gene3D" id="1.10.240.10">
    <property type="entry name" value="Tyrosyl-Transfer RNA Synthetase"/>
    <property type="match status" value="1"/>
</dbReference>
<dbReference type="HAMAP" id="MF_02006">
    <property type="entry name" value="Tyr_tRNA_synth_type1"/>
    <property type="match status" value="1"/>
</dbReference>
<dbReference type="InterPro" id="IPR001412">
    <property type="entry name" value="aa-tRNA-synth_I_CS"/>
</dbReference>
<dbReference type="InterPro" id="IPR002305">
    <property type="entry name" value="aa-tRNA-synth_Ic"/>
</dbReference>
<dbReference type="InterPro" id="IPR014729">
    <property type="entry name" value="Rossmann-like_a/b/a_fold"/>
</dbReference>
<dbReference type="InterPro" id="IPR002942">
    <property type="entry name" value="S4_RNA-bd"/>
</dbReference>
<dbReference type="InterPro" id="IPR036986">
    <property type="entry name" value="S4_RNA-bd_sf"/>
</dbReference>
<dbReference type="InterPro" id="IPR054608">
    <property type="entry name" value="SYY-like_C"/>
</dbReference>
<dbReference type="InterPro" id="IPR002307">
    <property type="entry name" value="Tyr-tRNA-ligase"/>
</dbReference>
<dbReference type="InterPro" id="IPR024088">
    <property type="entry name" value="Tyr-tRNA-ligase_bac-type"/>
</dbReference>
<dbReference type="InterPro" id="IPR024107">
    <property type="entry name" value="Tyr-tRNA-ligase_bac_1"/>
</dbReference>
<dbReference type="NCBIfam" id="TIGR00234">
    <property type="entry name" value="tyrS"/>
    <property type="match status" value="1"/>
</dbReference>
<dbReference type="PANTHER" id="PTHR11766:SF0">
    <property type="entry name" value="TYROSINE--TRNA LIGASE, MITOCHONDRIAL"/>
    <property type="match status" value="1"/>
</dbReference>
<dbReference type="PANTHER" id="PTHR11766">
    <property type="entry name" value="TYROSYL-TRNA SYNTHETASE"/>
    <property type="match status" value="1"/>
</dbReference>
<dbReference type="Pfam" id="PF22421">
    <property type="entry name" value="SYY_C-terminal"/>
    <property type="match status" value="1"/>
</dbReference>
<dbReference type="Pfam" id="PF00579">
    <property type="entry name" value="tRNA-synt_1b"/>
    <property type="match status" value="1"/>
</dbReference>
<dbReference type="PRINTS" id="PR01040">
    <property type="entry name" value="TRNASYNTHTYR"/>
</dbReference>
<dbReference type="SMART" id="SM00363">
    <property type="entry name" value="S4"/>
    <property type="match status" value="1"/>
</dbReference>
<dbReference type="SUPFAM" id="SSF55174">
    <property type="entry name" value="Alpha-L RNA-binding motif"/>
    <property type="match status" value="1"/>
</dbReference>
<dbReference type="SUPFAM" id="SSF52374">
    <property type="entry name" value="Nucleotidylyl transferase"/>
    <property type="match status" value="1"/>
</dbReference>
<dbReference type="PROSITE" id="PS00178">
    <property type="entry name" value="AA_TRNA_LIGASE_I"/>
    <property type="match status" value="1"/>
</dbReference>
<dbReference type="PROSITE" id="PS50889">
    <property type="entry name" value="S4"/>
    <property type="match status" value="1"/>
</dbReference>
<comment type="function">
    <text evidence="1">Catalyzes the attachment of tyrosine to tRNA(Tyr) in a two-step reaction: tyrosine is first activated by ATP to form Tyr-AMP and then transferred to the acceptor end of tRNA(Tyr).</text>
</comment>
<comment type="catalytic activity">
    <reaction evidence="1">
        <text>tRNA(Tyr) + L-tyrosine + ATP = L-tyrosyl-tRNA(Tyr) + AMP + diphosphate + H(+)</text>
        <dbReference type="Rhea" id="RHEA:10220"/>
        <dbReference type="Rhea" id="RHEA-COMP:9706"/>
        <dbReference type="Rhea" id="RHEA-COMP:9707"/>
        <dbReference type="ChEBI" id="CHEBI:15378"/>
        <dbReference type="ChEBI" id="CHEBI:30616"/>
        <dbReference type="ChEBI" id="CHEBI:33019"/>
        <dbReference type="ChEBI" id="CHEBI:58315"/>
        <dbReference type="ChEBI" id="CHEBI:78442"/>
        <dbReference type="ChEBI" id="CHEBI:78536"/>
        <dbReference type="ChEBI" id="CHEBI:456215"/>
        <dbReference type="EC" id="6.1.1.1"/>
    </reaction>
</comment>
<comment type="subunit">
    <text evidence="1">Homodimer.</text>
</comment>
<comment type="subcellular location">
    <subcellularLocation>
        <location evidence="1">Cytoplasm</location>
    </subcellularLocation>
</comment>
<comment type="similarity">
    <text evidence="1">Belongs to the class-I aminoacyl-tRNA synthetase family. TyrS type 1 subfamily.</text>
</comment>
<accession>P67612</accession>
<accession>A0A1R3XZ17</accession>
<accession>O33191</accession>
<accession>X2BII5</accession>
<evidence type="ECO:0000255" key="1">
    <source>
        <dbReference type="HAMAP-Rule" id="MF_02006"/>
    </source>
</evidence>
<gene>
    <name evidence="1" type="primary">tyrS</name>
    <name type="ordered locus">BQ2027_MB1715</name>
</gene>
<organism>
    <name type="scientific">Mycobacterium bovis (strain ATCC BAA-935 / AF2122/97)</name>
    <dbReference type="NCBI Taxonomy" id="233413"/>
    <lineage>
        <taxon>Bacteria</taxon>
        <taxon>Bacillati</taxon>
        <taxon>Actinomycetota</taxon>
        <taxon>Actinomycetes</taxon>
        <taxon>Mycobacteriales</taxon>
        <taxon>Mycobacteriaceae</taxon>
        <taxon>Mycobacterium</taxon>
        <taxon>Mycobacterium tuberculosis complex</taxon>
    </lineage>
</organism>
<proteinExistence type="inferred from homology"/>